<accession>Q1RIL0</accession>
<name>AMPG1_RICBR</name>
<organism>
    <name type="scientific">Rickettsia bellii (strain RML369-C)</name>
    <dbReference type="NCBI Taxonomy" id="336407"/>
    <lineage>
        <taxon>Bacteria</taxon>
        <taxon>Pseudomonadati</taxon>
        <taxon>Pseudomonadota</taxon>
        <taxon>Alphaproteobacteria</taxon>
        <taxon>Rickettsiales</taxon>
        <taxon>Rickettsiaceae</taxon>
        <taxon>Rickettsieae</taxon>
        <taxon>Rickettsia</taxon>
        <taxon>belli group</taxon>
    </lineage>
</organism>
<sequence length="410" mass="46365">MSRSLSIIWLFGLISGFNIMITGNTLNYWLAKENIALQTIGLLSLITLPYSINFLFAPIFDSLKIKYLDKIFGHRLSWICLTSIALVFFVYILSFLNPFDNLLLFASISLIISFFSSMQDTILSAFRTEIVNKESLGFASGIYIFGYRFGMLLANSGAIYLSIYLTFNEIYKIFAILIFIYLILLIVGVKYCRFDQNNDIEQTTNNNDDIFAFIKNILKPIGSISFIILILIFLILYRLPDNFINVMINPFLLHLNYDAFEIASVGKFWGVMGAIVGGLLGGFIMKKKNILDSILLFGIIHALAHILFIILKIHGKNSTLLFITIGAESITGGMTMTAYIAFISSLCQGKFRATQYSFFSSMMGISRSIFPIISGYIVVNFGWQNFFLFTTIITIPSLLVLLKIKNKLQQ</sequence>
<keyword id="KW-0997">Cell inner membrane</keyword>
<keyword id="KW-1003">Cell membrane</keyword>
<keyword id="KW-0472">Membrane</keyword>
<keyword id="KW-0812">Transmembrane</keyword>
<keyword id="KW-1133">Transmembrane helix</keyword>
<keyword id="KW-0813">Transport</keyword>
<protein>
    <recommendedName>
        <fullName>Putative transporter AmpG 1</fullName>
    </recommendedName>
</protein>
<evidence type="ECO:0000250" key="1"/>
<evidence type="ECO:0000255" key="2"/>
<evidence type="ECO:0000305" key="3"/>
<proteinExistence type="inferred from homology"/>
<feature type="chain" id="PRO_0000281087" description="Putative transporter AmpG 1">
    <location>
        <begin position="1"/>
        <end position="410"/>
    </location>
</feature>
<feature type="transmembrane region" description="Helical" evidence="2">
    <location>
        <begin position="5"/>
        <end position="25"/>
    </location>
</feature>
<feature type="transmembrane region" description="Helical" evidence="2">
    <location>
        <begin position="40"/>
        <end position="60"/>
    </location>
</feature>
<feature type="transmembrane region" description="Helical" evidence="2">
    <location>
        <begin position="76"/>
        <end position="96"/>
    </location>
</feature>
<feature type="transmembrane region" description="Helical" evidence="2">
    <location>
        <begin position="98"/>
        <end position="118"/>
    </location>
</feature>
<feature type="transmembrane region" description="Helical" evidence="2">
    <location>
        <begin position="141"/>
        <end position="161"/>
    </location>
</feature>
<feature type="transmembrane region" description="Helical" evidence="2">
    <location>
        <begin position="169"/>
        <end position="189"/>
    </location>
</feature>
<feature type="transmembrane region" description="Helical" evidence="2">
    <location>
        <begin position="217"/>
        <end position="237"/>
    </location>
</feature>
<feature type="transmembrane region" description="Helical" evidence="2">
    <location>
        <begin position="265"/>
        <end position="285"/>
    </location>
</feature>
<feature type="transmembrane region" description="Helical" evidence="2">
    <location>
        <begin position="290"/>
        <end position="310"/>
    </location>
</feature>
<feature type="transmembrane region" description="Helical" evidence="2">
    <location>
        <begin position="320"/>
        <end position="340"/>
    </location>
</feature>
<feature type="transmembrane region" description="Helical" evidence="2">
    <location>
        <begin position="356"/>
        <end position="378"/>
    </location>
</feature>
<feature type="transmembrane region" description="Helical" evidence="2">
    <location>
        <begin position="383"/>
        <end position="402"/>
    </location>
</feature>
<dbReference type="EMBL" id="CP000087">
    <property type="protein sequence ID" value="ABE04804.1"/>
    <property type="molecule type" value="Genomic_DNA"/>
</dbReference>
<dbReference type="RefSeq" id="WP_011477391.1">
    <property type="nucleotide sequence ID" value="NC_007940.1"/>
</dbReference>
<dbReference type="SMR" id="Q1RIL0"/>
<dbReference type="KEGG" id="rbe:RBE_0723"/>
<dbReference type="eggNOG" id="COG2807">
    <property type="taxonomic scope" value="Bacteria"/>
</dbReference>
<dbReference type="HOGENOM" id="CLU_029352_1_2_5"/>
<dbReference type="OrthoDB" id="9787815at2"/>
<dbReference type="Proteomes" id="UP000001951">
    <property type="component" value="Chromosome"/>
</dbReference>
<dbReference type="GO" id="GO:0005886">
    <property type="term" value="C:plasma membrane"/>
    <property type="evidence" value="ECO:0007669"/>
    <property type="project" value="UniProtKB-SubCell"/>
</dbReference>
<dbReference type="GO" id="GO:0022857">
    <property type="term" value="F:transmembrane transporter activity"/>
    <property type="evidence" value="ECO:0007669"/>
    <property type="project" value="InterPro"/>
</dbReference>
<dbReference type="CDD" id="cd17486">
    <property type="entry name" value="MFS_AmpG_like"/>
    <property type="match status" value="1"/>
</dbReference>
<dbReference type="Gene3D" id="1.20.1250.20">
    <property type="entry name" value="MFS general substrate transporter like domains"/>
    <property type="match status" value="2"/>
</dbReference>
<dbReference type="InterPro" id="IPR004752">
    <property type="entry name" value="AmpG_permease/AT-1"/>
</dbReference>
<dbReference type="InterPro" id="IPR011701">
    <property type="entry name" value="MFS"/>
</dbReference>
<dbReference type="InterPro" id="IPR020846">
    <property type="entry name" value="MFS_dom"/>
</dbReference>
<dbReference type="InterPro" id="IPR036259">
    <property type="entry name" value="MFS_trans_sf"/>
</dbReference>
<dbReference type="NCBIfam" id="TIGR00901">
    <property type="entry name" value="2A0125"/>
    <property type="match status" value="1"/>
</dbReference>
<dbReference type="PANTHER" id="PTHR12778:SF10">
    <property type="entry name" value="MAJOR FACILITATOR SUPERFAMILY DOMAIN-CONTAINING PROTEIN 3"/>
    <property type="match status" value="1"/>
</dbReference>
<dbReference type="PANTHER" id="PTHR12778">
    <property type="entry name" value="SOLUTE CARRIER FAMILY 33 ACETYL-COA TRANSPORTER -RELATED"/>
    <property type="match status" value="1"/>
</dbReference>
<dbReference type="Pfam" id="PF07690">
    <property type="entry name" value="MFS_1"/>
    <property type="match status" value="1"/>
</dbReference>
<dbReference type="SUPFAM" id="SSF103473">
    <property type="entry name" value="MFS general substrate transporter"/>
    <property type="match status" value="1"/>
</dbReference>
<dbReference type="PROSITE" id="PS50850">
    <property type="entry name" value="MFS"/>
    <property type="match status" value="1"/>
</dbReference>
<reference key="1">
    <citation type="journal article" date="2006" name="PLoS Genet.">
        <title>Genome sequence of Rickettsia bellii illuminates the role of amoebae in gene exchanges between intracellular pathogens.</title>
        <authorList>
            <person name="Ogata H."/>
            <person name="La Scola B."/>
            <person name="Audic S."/>
            <person name="Renesto P."/>
            <person name="Blanc G."/>
            <person name="Robert C."/>
            <person name="Fournier P.-E."/>
            <person name="Claverie J.-M."/>
            <person name="Raoult D."/>
        </authorList>
    </citation>
    <scope>NUCLEOTIDE SEQUENCE [LARGE SCALE GENOMIC DNA]</scope>
    <source>
        <strain>RML369-C</strain>
    </source>
</reference>
<comment type="subcellular location">
    <subcellularLocation>
        <location evidence="1">Cell inner membrane</location>
        <topology evidence="1">Multi-pass membrane protein</topology>
    </subcellularLocation>
</comment>
<comment type="similarity">
    <text evidence="3">Belongs to the major facilitator superfamily.</text>
</comment>
<gene>
    <name type="primary">ampG1</name>
    <name type="ordered locus">RBE_0723</name>
</gene>